<proteinExistence type="inferred from homology"/>
<comment type="function">
    <text evidence="1">Catalyzes the condensation of iminoaspartate with dihydroxyacetone phosphate to form quinolinate.</text>
</comment>
<comment type="catalytic activity">
    <reaction evidence="1">
        <text>iminosuccinate + dihydroxyacetone phosphate = quinolinate + phosphate + 2 H2O + H(+)</text>
        <dbReference type="Rhea" id="RHEA:25888"/>
        <dbReference type="ChEBI" id="CHEBI:15377"/>
        <dbReference type="ChEBI" id="CHEBI:15378"/>
        <dbReference type="ChEBI" id="CHEBI:29959"/>
        <dbReference type="ChEBI" id="CHEBI:43474"/>
        <dbReference type="ChEBI" id="CHEBI:57642"/>
        <dbReference type="ChEBI" id="CHEBI:77875"/>
        <dbReference type="EC" id="2.5.1.72"/>
    </reaction>
    <physiologicalReaction direction="left-to-right" evidence="1">
        <dbReference type="Rhea" id="RHEA:25889"/>
    </physiologicalReaction>
</comment>
<comment type="cofactor">
    <cofactor evidence="1">
        <name>[4Fe-4S] cluster</name>
        <dbReference type="ChEBI" id="CHEBI:49883"/>
    </cofactor>
    <text evidence="1">Binds 1 [4Fe-4S] cluster per subunit.</text>
</comment>
<comment type="pathway">
    <text evidence="1">Cofactor biosynthesis; NAD(+) biosynthesis; quinolinate from iminoaspartate: step 1/1.</text>
</comment>
<comment type="subcellular location">
    <subcellularLocation>
        <location evidence="1">Cytoplasm</location>
    </subcellularLocation>
</comment>
<comment type="similarity">
    <text evidence="1">Belongs to the quinolinate synthase family. Type 2 subfamily.</text>
</comment>
<dbReference type="EC" id="2.5.1.72" evidence="1"/>
<dbReference type="EMBL" id="CP000312">
    <property type="protein sequence ID" value="ABG87252.1"/>
    <property type="molecule type" value="Genomic_DNA"/>
</dbReference>
<dbReference type="RefSeq" id="WP_011591491.1">
    <property type="nucleotide sequence ID" value="NC_008262.1"/>
</dbReference>
<dbReference type="SMR" id="Q0SVZ5"/>
<dbReference type="KEGG" id="cpr:CPR_0376"/>
<dbReference type="UniPathway" id="UPA00253">
    <property type="reaction ID" value="UER00327"/>
</dbReference>
<dbReference type="Proteomes" id="UP000001824">
    <property type="component" value="Chromosome"/>
</dbReference>
<dbReference type="GO" id="GO:0005829">
    <property type="term" value="C:cytosol"/>
    <property type="evidence" value="ECO:0007669"/>
    <property type="project" value="TreeGrafter"/>
</dbReference>
<dbReference type="GO" id="GO:0051539">
    <property type="term" value="F:4 iron, 4 sulfur cluster binding"/>
    <property type="evidence" value="ECO:0007669"/>
    <property type="project" value="UniProtKB-KW"/>
</dbReference>
<dbReference type="GO" id="GO:0046872">
    <property type="term" value="F:metal ion binding"/>
    <property type="evidence" value="ECO:0007669"/>
    <property type="project" value="UniProtKB-KW"/>
</dbReference>
<dbReference type="GO" id="GO:0008987">
    <property type="term" value="F:quinolinate synthetase A activity"/>
    <property type="evidence" value="ECO:0007669"/>
    <property type="project" value="UniProtKB-UniRule"/>
</dbReference>
<dbReference type="GO" id="GO:0034628">
    <property type="term" value="P:'de novo' NAD biosynthetic process from L-aspartate"/>
    <property type="evidence" value="ECO:0007669"/>
    <property type="project" value="TreeGrafter"/>
</dbReference>
<dbReference type="FunFam" id="3.40.50.10800:FF:000003">
    <property type="entry name" value="Quinolinate synthase A"/>
    <property type="match status" value="1"/>
</dbReference>
<dbReference type="Gene3D" id="3.40.50.10800">
    <property type="entry name" value="NadA-like"/>
    <property type="match status" value="3"/>
</dbReference>
<dbReference type="HAMAP" id="MF_00568">
    <property type="entry name" value="NadA_type2"/>
    <property type="match status" value="1"/>
</dbReference>
<dbReference type="InterPro" id="IPR003473">
    <property type="entry name" value="NadA"/>
</dbReference>
<dbReference type="InterPro" id="IPR036094">
    <property type="entry name" value="NadA_sf"/>
</dbReference>
<dbReference type="InterPro" id="IPR023066">
    <property type="entry name" value="Quinolinate_synth_type2"/>
</dbReference>
<dbReference type="NCBIfam" id="TIGR00550">
    <property type="entry name" value="nadA"/>
    <property type="match status" value="1"/>
</dbReference>
<dbReference type="NCBIfam" id="NF006878">
    <property type="entry name" value="PRK09375.1-2"/>
    <property type="match status" value="1"/>
</dbReference>
<dbReference type="PANTHER" id="PTHR30573:SF0">
    <property type="entry name" value="QUINOLINATE SYNTHASE, CHLOROPLASTIC"/>
    <property type="match status" value="1"/>
</dbReference>
<dbReference type="PANTHER" id="PTHR30573">
    <property type="entry name" value="QUINOLINATE SYNTHETASE A"/>
    <property type="match status" value="1"/>
</dbReference>
<dbReference type="Pfam" id="PF02445">
    <property type="entry name" value="NadA"/>
    <property type="match status" value="1"/>
</dbReference>
<dbReference type="SUPFAM" id="SSF142754">
    <property type="entry name" value="NadA-like"/>
    <property type="match status" value="1"/>
</dbReference>
<protein>
    <recommendedName>
        <fullName evidence="1">Quinolinate synthase</fullName>
        <ecNumber evidence="1">2.5.1.72</ecNumber>
    </recommendedName>
</protein>
<organism>
    <name type="scientific">Clostridium perfringens (strain SM101 / Type A)</name>
    <dbReference type="NCBI Taxonomy" id="289380"/>
    <lineage>
        <taxon>Bacteria</taxon>
        <taxon>Bacillati</taxon>
        <taxon>Bacillota</taxon>
        <taxon>Clostridia</taxon>
        <taxon>Eubacteriales</taxon>
        <taxon>Clostridiaceae</taxon>
        <taxon>Clostridium</taxon>
    </lineage>
</organism>
<sequence>MDIRDKILKLKKEKGAIILAHYYQIPEIQEIADYVGDSYYLSKIAKDCEENIIVFCGVKFMAESAKILSPEKTVILPVMEAGCVMADMATEEGLAKLKEEHPNAKVVCYINSSTEVKALSDVCCTSSNAENIINNLEEKEIIFLPDRNLGSYIQEKTPDKKFILWNGFCIVHEAIQKEEILRLKREHEGILTVAHPECSKEIRDISDFIGSTSEIINFVNNSSNKKFIIITEEGVLHQLRKNGEEKEFYIPYGKMVCRNMKMTTLKDLYESLLKMENKIEIDEDLRLKAYNSLKNMHKLGG</sequence>
<reference key="1">
    <citation type="journal article" date="2006" name="Genome Res.">
        <title>Skewed genomic variability in strains of the toxigenic bacterial pathogen, Clostridium perfringens.</title>
        <authorList>
            <person name="Myers G.S.A."/>
            <person name="Rasko D.A."/>
            <person name="Cheung J.K."/>
            <person name="Ravel J."/>
            <person name="Seshadri R."/>
            <person name="DeBoy R.T."/>
            <person name="Ren Q."/>
            <person name="Varga J."/>
            <person name="Awad M.M."/>
            <person name="Brinkac L.M."/>
            <person name="Daugherty S.C."/>
            <person name="Haft D.H."/>
            <person name="Dodson R.J."/>
            <person name="Madupu R."/>
            <person name="Nelson W.C."/>
            <person name="Rosovitz M.J."/>
            <person name="Sullivan S.A."/>
            <person name="Khouri H."/>
            <person name="Dimitrov G.I."/>
            <person name="Watkins K.L."/>
            <person name="Mulligan S."/>
            <person name="Benton J."/>
            <person name="Radune D."/>
            <person name="Fisher D.J."/>
            <person name="Atkins H.S."/>
            <person name="Hiscox T."/>
            <person name="Jost B.H."/>
            <person name="Billington S.J."/>
            <person name="Songer J.G."/>
            <person name="McClane B.A."/>
            <person name="Titball R.W."/>
            <person name="Rood J.I."/>
            <person name="Melville S.B."/>
            <person name="Paulsen I.T."/>
        </authorList>
    </citation>
    <scope>NUCLEOTIDE SEQUENCE [LARGE SCALE GENOMIC DNA]</scope>
    <source>
        <strain>SM101 / Type A</strain>
    </source>
</reference>
<name>NADA_CLOPS</name>
<accession>Q0SVZ5</accession>
<gene>
    <name evidence="1" type="primary">nadA</name>
    <name type="ordered locus">CPR_0376</name>
</gene>
<feature type="chain" id="PRO_1000061153" description="Quinolinate synthase">
    <location>
        <begin position="1"/>
        <end position="301"/>
    </location>
</feature>
<feature type="binding site" evidence="1">
    <location>
        <position position="21"/>
    </location>
    <ligand>
        <name>iminosuccinate</name>
        <dbReference type="ChEBI" id="CHEBI:77875"/>
    </ligand>
</feature>
<feature type="binding site" evidence="1">
    <location>
        <position position="38"/>
    </location>
    <ligand>
        <name>iminosuccinate</name>
        <dbReference type="ChEBI" id="CHEBI:77875"/>
    </ligand>
</feature>
<feature type="binding site" evidence="1">
    <location>
        <position position="83"/>
    </location>
    <ligand>
        <name>[4Fe-4S] cluster</name>
        <dbReference type="ChEBI" id="CHEBI:49883"/>
    </ligand>
</feature>
<feature type="binding site" evidence="1">
    <location>
        <begin position="109"/>
        <end position="111"/>
    </location>
    <ligand>
        <name>iminosuccinate</name>
        <dbReference type="ChEBI" id="CHEBI:77875"/>
    </ligand>
</feature>
<feature type="binding site" evidence="1">
    <location>
        <position position="126"/>
    </location>
    <ligand>
        <name>iminosuccinate</name>
        <dbReference type="ChEBI" id="CHEBI:77875"/>
    </ligand>
</feature>
<feature type="binding site" evidence="1">
    <location>
        <position position="169"/>
    </location>
    <ligand>
        <name>[4Fe-4S] cluster</name>
        <dbReference type="ChEBI" id="CHEBI:49883"/>
    </ligand>
</feature>
<feature type="binding site" evidence="1">
    <location>
        <begin position="195"/>
        <end position="197"/>
    </location>
    <ligand>
        <name>iminosuccinate</name>
        <dbReference type="ChEBI" id="CHEBI:77875"/>
    </ligand>
</feature>
<feature type="binding site" evidence="1">
    <location>
        <position position="212"/>
    </location>
    <ligand>
        <name>iminosuccinate</name>
        <dbReference type="ChEBI" id="CHEBI:77875"/>
    </ligand>
</feature>
<feature type="binding site" evidence="1">
    <location>
        <position position="257"/>
    </location>
    <ligand>
        <name>[4Fe-4S] cluster</name>
        <dbReference type="ChEBI" id="CHEBI:49883"/>
    </ligand>
</feature>
<evidence type="ECO:0000255" key="1">
    <source>
        <dbReference type="HAMAP-Rule" id="MF_00568"/>
    </source>
</evidence>
<keyword id="KW-0004">4Fe-4S</keyword>
<keyword id="KW-0963">Cytoplasm</keyword>
<keyword id="KW-0408">Iron</keyword>
<keyword id="KW-0411">Iron-sulfur</keyword>
<keyword id="KW-0479">Metal-binding</keyword>
<keyword id="KW-0662">Pyridine nucleotide biosynthesis</keyword>
<keyword id="KW-0808">Transferase</keyword>